<evidence type="ECO:0000255" key="1">
    <source>
        <dbReference type="HAMAP-Rule" id="MF_00761"/>
    </source>
</evidence>
<feature type="chain" id="PRO_1000148413" description="UPF0303 protein BAMEG_1180">
    <location>
        <begin position="1"/>
        <end position="158"/>
    </location>
</feature>
<dbReference type="EMBL" id="CP001215">
    <property type="protein sequence ID" value="ACP14764.1"/>
    <property type="molecule type" value="Genomic_DNA"/>
</dbReference>
<dbReference type="SMR" id="C3LBF0"/>
<dbReference type="KEGG" id="bah:BAMEG_1180"/>
<dbReference type="HOGENOM" id="CLU_101036_2_0_9"/>
<dbReference type="FunFam" id="3.30.450.150:FF:000002">
    <property type="entry name" value="UPF0303 protein BCAH820_3413"/>
    <property type="match status" value="1"/>
</dbReference>
<dbReference type="Gene3D" id="3.30.450.150">
    <property type="entry name" value="Haem-degrading domain"/>
    <property type="match status" value="1"/>
</dbReference>
<dbReference type="HAMAP" id="MF_00761">
    <property type="entry name" value="UPF0303"/>
    <property type="match status" value="1"/>
</dbReference>
<dbReference type="InterPro" id="IPR005624">
    <property type="entry name" value="PduO/GlcC-like"/>
</dbReference>
<dbReference type="InterPro" id="IPR038084">
    <property type="entry name" value="PduO/GlcC-like_sf"/>
</dbReference>
<dbReference type="InterPro" id="IPR010371">
    <property type="entry name" value="YBR137W-like"/>
</dbReference>
<dbReference type="NCBIfam" id="NF002692">
    <property type="entry name" value="PRK02487.1-1"/>
    <property type="match status" value="1"/>
</dbReference>
<dbReference type="NCBIfam" id="NF002696">
    <property type="entry name" value="PRK02487.1-5"/>
    <property type="match status" value="1"/>
</dbReference>
<dbReference type="PANTHER" id="PTHR28255">
    <property type="match status" value="1"/>
</dbReference>
<dbReference type="PANTHER" id="PTHR28255:SF1">
    <property type="entry name" value="UPF0303 PROTEIN YBR137W"/>
    <property type="match status" value="1"/>
</dbReference>
<dbReference type="Pfam" id="PF03928">
    <property type="entry name" value="HbpS-like"/>
    <property type="match status" value="1"/>
</dbReference>
<dbReference type="PIRSF" id="PIRSF008757">
    <property type="entry name" value="UCP008757"/>
    <property type="match status" value="1"/>
</dbReference>
<dbReference type="SUPFAM" id="SSF143744">
    <property type="entry name" value="GlcG-like"/>
    <property type="match status" value="1"/>
</dbReference>
<name>Y1180_BACAC</name>
<sequence length="158" mass="17915">MSSSNLNEISKQILKEEETLQFSSFTNEDALQLGLFIVETAKQEGKVIAVDITKNGVQLFHFKMTGTNEENTKWIERKKRVVSLHDRSSYYMQIQSEITGISYNEKYLLNTSEYAAFGGCFPIRVKNVGVIGMITVSGLPPEEDHELVIRAVKNHLNQ</sequence>
<proteinExistence type="inferred from homology"/>
<reference key="1">
    <citation type="submission" date="2008-10" db="EMBL/GenBank/DDBJ databases">
        <title>Genome sequence of Bacillus anthracis str. CDC 684.</title>
        <authorList>
            <person name="Dodson R.J."/>
            <person name="Munk A.C."/>
            <person name="Brettin T."/>
            <person name="Bruce D."/>
            <person name="Detter C."/>
            <person name="Tapia R."/>
            <person name="Han C."/>
            <person name="Sutton G."/>
            <person name="Sims D."/>
        </authorList>
    </citation>
    <scope>NUCLEOTIDE SEQUENCE [LARGE SCALE GENOMIC DNA]</scope>
    <source>
        <strain>CDC 684 / NRRL 3495</strain>
    </source>
</reference>
<accession>C3LBF0</accession>
<protein>
    <recommendedName>
        <fullName evidence="1">UPF0303 protein BAMEG_1180</fullName>
    </recommendedName>
</protein>
<organism>
    <name type="scientific">Bacillus anthracis (strain CDC 684 / NRRL 3495)</name>
    <dbReference type="NCBI Taxonomy" id="568206"/>
    <lineage>
        <taxon>Bacteria</taxon>
        <taxon>Bacillati</taxon>
        <taxon>Bacillota</taxon>
        <taxon>Bacilli</taxon>
        <taxon>Bacillales</taxon>
        <taxon>Bacillaceae</taxon>
        <taxon>Bacillus</taxon>
        <taxon>Bacillus cereus group</taxon>
    </lineage>
</organism>
<comment type="similarity">
    <text evidence="1">Belongs to the UPF0303 family.</text>
</comment>
<gene>
    <name type="ordered locus">BAMEG_1180</name>
</gene>